<gene>
    <name type="ordered locus">MJ1031</name>
</gene>
<accession>Q58437</accession>
<reference key="1">
    <citation type="journal article" date="1996" name="Science">
        <title>Complete genome sequence of the methanogenic archaeon, Methanococcus jannaschii.</title>
        <authorList>
            <person name="Bult C.J."/>
            <person name="White O."/>
            <person name="Olsen G.J."/>
            <person name="Zhou L."/>
            <person name="Fleischmann R.D."/>
            <person name="Sutton G.G."/>
            <person name="Blake J.A."/>
            <person name="FitzGerald L.M."/>
            <person name="Clayton R.A."/>
            <person name="Gocayne J.D."/>
            <person name="Kerlavage A.R."/>
            <person name="Dougherty B.A."/>
            <person name="Tomb J.-F."/>
            <person name="Adams M.D."/>
            <person name="Reich C.I."/>
            <person name="Overbeek R."/>
            <person name="Kirkness E.F."/>
            <person name="Weinstock K.G."/>
            <person name="Merrick J.M."/>
            <person name="Glodek A."/>
            <person name="Scott J.L."/>
            <person name="Geoghagen N.S.M."/>
            <person name="Weidman J.F."/>
            <person name="Fuhrmann J.L."/>
            <person name="Nguyen D."/>
            <person name="Utterback T.R."/>
            <person name="Kelley J.M."/>
            <person name="Peterson J.D."/>
            <person name="Sadow P.W."/>
            <person name="Hanna M.C."/>
            <person name="Cotton M.D."/>
            <person name="Roberts K.M."/>
            <person name="Hurst M.A."/>
            <person name="Kaine B.P."/>
            <person name="Borodovsky M."/>
            <person name="Klenk H.-P."/>
            <person name="Fraser C.M."/>
            <person name="Smith H.O."/>
            <person name="Woese C.R."/>
            <person name="Venter J.C."/>
        </authorList>
    </citation>
    <scope>NUCLEOTIDE SEQUENCE [LARGE SCALE GENOMIC DNA]</scope>
    <source>
        <strain>ATCC 43067 / DSM 2661 / JAL-1 / JCM 10045 / NBRC 100440</strain>
    </source>
</reference>
<evidence type="ECO:0000255" key="1"/>
<evidence type="ECO:0000305" key="2"/>
<keyword id="KW-1003">Cell membrane</keyword>
<keyword id="KW-0472">Membrane</keyword>
<keyword id="KW-1185">Reference proteome</keyword>
<keyword id="KW-0812">Transmembrane</keyword>
<keyword id="KW-1133">Transmembrane helix</keyword>
<keyword id="KW-0813">Transport</keyword>
<dbReference type="EMBL" id="L77117">
    <property type="protein sequence ID" value="AAB99035.1"/>
    <property type="molecule type" value="Genomic_DNA"/>
</dbReference>
<dbReference type="PIR" id="F64428">
    <property type="entry name" value="F64428"/>
</dbReference>
<dbReference type="SMR" id="Q58437"/>
<dbReference type="STRING" id="243232.MJ_1031"/>
<dbReference type="TCDB" id="2.A.69.4.2">
    <property type="family name" value="the auxin efflux carrier (aec) family"/>
</dbReference>
<dbReference type="PaxDb" id="243232-MJ_1031"/>
<dbReference type="DNASU" id="1451928"/>
<dbReference type="EnsemblBacteria" id="AAB99035">
    <property type="protein sequence ID" value="AAB99035"/>
    <property type="gene ID" value="MJ_1031"/>
</dbReference>
<dbReference type="KEGG" id="mja:MJ_1031"/>
<dbReference type="eggNOG" id="arCOG04756">
    <property type="taxonomic scope" value="Archaea"/>
</dbReference>
<dbReference type="HOGENOM" id="CLU_056175_5_2_2"/>
<dbReference type="InParanoid" id="Q58437"/>
<dbReference type="PhylomeDB" id="Q58437"/>
<dbReference type="Proteomes" id="UP000000805">
    <property type="component" value="Chromosome"/>
</dbReference>
<dbReference type="GO" id="GO:0005886">
    <property type="term" value="C:plasma membrane"/>
    <property type="evidence" value="ECO:0007669"/>
    <property type="project" value="UniProtKB-SubCell"/>
</dbReference>
<dbReference type="GO" id="GO:0055085">
    <property type="term" value="P:transmembrane transport"/>
    <property type="evidence" value="ECO:0007669"/>
    <property type="project" value="InterPro"/>
</dbReference>
<dbReference type="Gene3D" id="1.20.1530.20">
    <property type="match status" value="1"/>
</dbReference>
<dbReference type="InterPro" id="IPR014024">
    <property type="entry name" value="Auxin_eff_plant"/>
</dbReference>
<dbReference type="InterPro" id="IPR004776">
    <property type="entry name" value="Mem_transp_PIN-like"/>
</dbReference>
<dbReference type="InterPro" id="IPR038770">
    <property type="entry name" value="Na+/solute_symporter_sf"/>
</dbReference>
<dbReference type="NCBIfam" id="TIGR00946">
    <property type="entry name" value="2a69"/>
    <property type="match status" value="1"/>
</dbReference>
<dbReference type="PANTHER" id="PTHR36838">
    <property type="entry name" value="AUXIN EFFLUX CARRIER FAMILY PROTEIN"/>
    <property type="match status" value="1"/>
</dbReference>
<dbReference type="PANTHER" id="PTHR36838:SF3">
    <property type="entry name" value="TRANSPORTER AUXIN EFFLUX CARRIER EC FAMILY"/>
    <property type="match status" value="1"/>
</dbReference>
<dbReference type="Pfam" id="PF03547">
    <property type="entry name" value="Mem_trans"/>
    <property type="match status" value="1"/>
</dbReference>
<protein>
    <recommendedName>
        <fullName>Uncharacterized transporter MJ1031</fullName>
    </recommendedName>
</protein>
<feature type="chain" id="PRO_0000123803" description="Uncharacterized transporter MJ1031">
    <location>
        <begin position="1"/>
        <end position="308"/>
    </location>
</feature>
<feature type="transmembrane region" description="Helical" evidence="1">
    <location>
        <begin position="6"/>
        <end position="26"/>
    </location>
</feature>
<feature type="transmembrane region" description="Helical" evidence="1">
    <location>
        <begin position="31"/>
        <end position="51"/>
    </location>
</feature>
<feature type="transmembrane region" description="Helical" evidence="1">
    <location>
        <begin position="63"/>
        <end position="83"/>
    </location>
</feature>
<feature type="transmembrane region" description="Helical" evidence="1">
    <location>
        <begin position="100"/>
        <end position="120"/>
    </location>
</feature>
<feature type="transmembrane region" description="Helical" evidence="1">
    <location>
        <begin position="128"/>
        <end position="148"/>
    </location>
</feature>
<feature type="transmembrane region" description="Helical" evidence="1">
    <location>
        <begin position="162"/>
        <end position="182"/>
    </location>
</feature>
<feature type="transmembrane region" description="Helical" evidence="1">
    <location>
        <begin position="195"/>
        <end position="215"/>
    </location>
</feature>
<feature type="transmembrane region" description="Helical" evidence="1">
    <location>
        <begin position="221"/>
        <end position="241"/>
    </location>
</feature>
<feature type="transmembrane region" description="Helical" evidence="1">
    <location>
        <begin position="257"/>
        <end position="277"/>
    </location>
</feature>
<feature type="transmembrane region" description="Helical" evidence="1">
    <location>
        <begin position="287"/>
        <end position="307"/>
    </location>
</feature>
<organism>
    <name type="scientific">Methanocaldococcus jannaschii (strain ATCC 43067 / DSM 2661 / JAL-1 / JCM 10045 / NBRC 100440)</name>
    <name type="common">Methanococcus jannaschii</name>
    <dbReference type="NCBI Taxonomy" id="243232"/>
    <lineage>
        <taxon>Archaea</taxon>
        <taxon>Methanobacteriati</taxon>
        <taxon>Methanobacteriota</taxon>
        <taxon>Methanomada group</taxon>
        <taxon>Methanococci</taxon>
        <taxon>Methanococcales</taxon>
        <taxon>Methanocaldococcaceae</taxon>
        <taxon>Methanocaldococcus</taxon>
    </lineage>
</organism>
<comment type="subcellular location">
    <subcellularLocation>
        <location evidence="2">Cell membrane</location>
        <topology evidence="2">Multi-pass membrane protein</topology>
    </subcellularLocation>
</comment>
<comment type="similarity">
    <text evidence="2">Belongs to the auxin efflux carrier (TC 2.A.69) family.</text>
</comment>
<sequence>MIPMDVVLIVLILVLVGYFSKIFGILKEEHAKILNNIVIYIAMPSTIFLTISKNVSSSQILEFLKLPVVIFLCCLFVGILAYLLGKHIFKLKDEKLGGLILVSMLGNTGFLGYPVALGMFGEEGLARAIFCDLGGVFATMLLGTYVGIRFGKGRDKSILKDMAKFPPLITGILSIILVFFGFKLNYIPSFILKSLNYLSSATVPLIMMSLGLSLSPKALKFGVFWGIIASIFRFIVSPATAFTLSELINIKGLEKNVLLVESSMPSAMMTLVLGTLYELDIKLIASSIFITTTFSLLVIALWGWILLN</sequence>
<proteinExistence type="inferred from homology"/>
<name>Y1031_METJA</name>